<protein>
    <recommendedName>
        <fullName>B3 domain-containing protein At1g20600</fullName>
    </recommendedName>
</protein>
<name>Y1060_ARATH</name>
<sequence>MANSTGKPTSSTQEDEEVTYILAQLMQDVMDREEDIDDEDDIDDEVASLPLLLVSQANQKQSRKREEKTEKNQPKRVKNQNIMKINIHDFSEETLRLIEDWYNAELDPQDIFGDDEVTRRFSRPIKKQLMSSDVDTDQSRLMLSKEQVKEKMLPFLEESEDPVKGVDVSVYGPDGEVQQMKFKMWNGDKTPVLTSGWMQFVADYGLLKTSDFVTDGKVSQLEHVFIRGSKVRCCNTS</sequence>
<dbReference type="EMBL" id="AC027665">
    <property type="protein sequence ID" value="AAF79624.1"/>
    <property type="status" value="ALT_SEQ"/>
    <property type="molecule type" value="Genomic_DNA"/>
</dbReference>
<dbReference type="EMBL" id="AC069251">
    <property type="protein sequence ID" value="AAF80610.1"/>
    <property type="molecule type" value="Genomic_DNA"/>
</dbReference>
<dbReference type="EMBL" id="CP002684">
    <property type="protein sequence ID" value="AEE29992.1"/>
    <property type="molecule type" value="Genomic_DNA"/>
</dbReference>
<dbReference type="RefSeq" id="NP_173484.1">
    <property type="nucleotide sequence ID" value="NM_101911.2"/>
</dbReference>
<dbReference type="SMR" id="Q9LM90"/>
<dbReference type="STRING" id="3702.Q9LM90"/>
<dbReference type="PaxDb" id="3702-AT1G20600.1"/>
<dbReference type="ProteomicsDB" id="242413"/>
<dbReference type="EnsemblPlants" id="AT1G20600.1">
    <property type="protein sequence ID" value="AT1G20600.1"/>
    <property type="gene ID" value="AT1G20600"/>
</dbReference>
<dbReference type="GeneID" id="838649"/>
<dbReference type="Gramene" id="AT1G20600.1">
    <property type="protein sequence ID" value="AT1G20600.1"/>
    <property type="gene ID" value="AT1G20600"/>
</dbReference>
<dbReference type="KEGG" id="ath:AT1G20600"/>
<dbReference type="Araport" id="AT1G20600"/>
<dbReference type="TAIR" id="AT1G20600"/>
<dbReference type="eggNOG" id="ENOG502S91R">
    <property type="taxonomic scope" value="Eukaryota"/>
</dbReference>
<dbReference type="HOGENOM" id="CLU_100761_0_0_1"/>
<dbReference type="InParanoid" id="Q9LM90"/>
<dbReference type="OMA" id="MHPLLEH"/>
<dbReference type="OrthoDB" id="668173at2759"/>
<dbReference type="PhylomeDB" id="Q9LM90"/>
<dbReference type="PRO" id="PR:Q9LM90"/>
<dbReference type="Proteomes" id="UP000006548">
    <property type="component" value="Chromosome 1"/>
</dbReference>
<dbReference type="ExpressionAtlas" id="Q9LM90">
    <property type="expression patterns" value="baseline"/>
</dbReference>
<dbReference type="GO" id="GO:0005634">
    <property type="term" value="C:nucleus"/>
    <property type="evidence" value="ECO:0007669"/>
    <property type="project" value="UniProtKB-SubCell"/>
</dbReference>
<dbReference type="GO" id="GO:0003677">
    <property type="term" value="F:DNA binding"/>
    <property type="evidence" value="ECO:0007669"/>
    <property type="project" value="UniProtKB-KW"/>
</dbReference>
<dbReference type="CDD" id="cd10017">
    <property type="entry name" value="B3_DNA"/>
    <property type="match status" value="1"/>
</dbReference>
<dbReference type="Gene3D" id="2.40.330.10">
    <property type="entry name" value="DNA-binding pseudobarrel domain"/>
    <property type="match status" value="1"/>
</dbReference>
<dbReference type="InterPro" id="IPR005508">
    <property type="entry name" value="At2g31720-like"/>
</dbReference>
<dbReference type="InterPro" id="IPR003340">
    <property type="entry name" value="B3_DNA-bd"/>
</dbReference>
<dbReference type="InterPro" id="IPR015300">
    <property type="entry name" value="DNA-bd_pseudobarrel_sf"/>
</dbReference>
<dbReference type="PANTHER" id="PTHR31541">
    <property type="entry name" value="B3 DOMAIN PLANT PROTEIN-RELATED"/>
    <property type="match status" value="1"/>
</dbReference>
<dbReference type="PANTHER" id="PTHR31541:SF28">
    <property type="entry name" value="TF-B3 DOMAIN-CONTAINING PROTEIN"/>
    <property type="match status" value="1"/>
</dbReference>
<dbReference type="SMART" id="SM01019">
    <property type="entry name" value="B3"/>
    <property type="match status" value="1"/>
</dbReference>
<dbReference type="SUPFAM" id="SSF101936">
    <property type="entry name" value="DNA-binding pseudobarrel domain"/>
    <property type="match status" value="1"/>
</dbReference>
<comment type="subcellular location">
    <subcellularLocation>
        <location evidence="1">Nucleus</location>
    </subcellularLocation>
</comment>
<comment type="sequence caution" evidence="3">
    <conflict type="erroneous gene model prediction">
        <sequence resource="EMBL-CDS" id="AAF79624"/>
    </conflict>
</comment>
<accession>Q9LM90</accession>
<accession>Q9LMW8</accession>
<keyword id="KW-0238">DNA-binding</keyword>
<keyword id="KW-0539">Nucleus</keyword>
<keyword id="KW-1185">Reference proteome</keyword>
<keyword id="KW-0804">Transcription</keyword>
<keyword id="KW-0805">Transcription regulation</keyword>
<gene>
    <name type="ordered locus">At1g20600</name>
    <name type="ORF">F2D10.9</name>
    <name type="ORF">F5M15.7</name>
</gene>
<evidence type="ECO:0000250" key="1"/>
<evidence type="ECO:0000256" key="2">
    <source>
        <dbReference type="SAM" id="MobiDB-lite"/>
    </source>
</evidence>
<evidence type="ECO:0000305" key="3"/>
<organism>
    <name type="scientific">Arabidopsis thaliana</name>
    <name type="common">Mouse-ear cress</name>
    <dbReference type="NCBI Taxonomy" id="3702"/>
    <lineage>
        <taxon>Eukaryota</taxon>
        <taxon>Viridiplantae</taxon>
        <taxon>Streptophyta</taxon>
        <taxon>Embryophyta</taxon>
        <taxon>Tracheophyta</taxon>
        <taxon>Spermatophyta</taxon>
        <taxon>Magnoliopsida</taxon>
        <taxon>eudicotyledons</taxon>
        <taxon>Gunneridae</taxon>
        <taxon>Pentapetalae</taxon>
        <taxon>rosids</taxon>
        <taxon>malvids</taxon>
        <taxon>Brassicales</taxon>
        <taxon>Brassicaceae</taxon>
        <taxon>Camelineae</taxon>
        <taxon>Arabidopsis</taxon>
    </lineage>
</organism>
<feature type="chain" id="PRO_0000375122" description="B3 domain-containing protein At1g20600">
    <location>
        <begin position="1"/>
        <end position="237"/>
    </location>
</feature>
<feature type="DNA-binding region" description="TF-B3">
    <location>
        <begin position="126"/>
        <end position="230"/>
    </location>
</feature>
<feature type="region of interest" description="Disordered" evidence="2">
    <location>
        <begin position="53"/>
        <end position="79"/>
    </location>
</feature>
<feature type="compositionally biased region" description="Basic and acidic residues" evidence="2">
    <location>
        <begin position="64"/>
        <end position="73"/>
    </location>
</feature>
<reference key="1">
    <citation type="journal article" date="2000" name="Nature">
        <title>Sequence and analysis of chromosome 1 of the plant Arabidopsis thaliana.</title>
        <authorList>
            <person name="Theologis A."/>
            <person name="Ecker J.R."/>
            <person name="Palm C.J."/>
            <person name="Federspiel N.A."/>
            <person name="Kaul S."/>
            <person name="White O."/>
            <person name="Alonso J."/>
            <person name="Altafi H."/>
            <person name="Araujo R."/>
            <person name="Bowman C.L."/>
            <person name="Brooks S.Y."/>
            <person name="Buehler E."/>
            <person name="Chan A."/>
            <person name="Chao Q."/>
            <person name="Chen H."/>
            <person name="Cheuk R.F."/>
            <person name="Chin C.W."/>
            <person name="Chung M.K."/>
            <person name="Conn L."/>
            <person name="Conway A.B."/>
            <person name="Conway A.R."/>
            <person name="Creasy T.H."/>
            <person name="Dewar K."/>
            <person name="Dunn P."/>
            <person name="Etgu P."/>
            <person name="Feldblyum T.V."/>
            <person name="Feng J.-D."/>
            <person name="Fong B."/>
            <person name="Fujii C.Y."/>
            <person name="Gill J.E."/>
            <person name="Goldsmith A.D."/>
            <person name="Haas B."/>
            <person name="Hansen N.F."/>
            <person name="Hughes B."/>
            <person name="Huizar L."/>
            <person name="Hunter J.L."/>
            <person name="Jenkins J."/>
            <person name="Johnson-Hopson C."/>
            <person name="Khan S."/>
            <person name="Khaykin E."/>
            <person name="Kim C.J."/>
            <person name="Koo H.L."/>
            <person name="Kremenetskaia I."/>
            <person name="Kurtz D.B."/>
            <person name="Kwan A."/>
            <person name="Lam B."/>
            <person name="Langin-Hooper S."/>
            <person name="Lee A."/>
            <person name="Lee J.M."/>
            <person name="Lenz C.A."/>
            <person name="Li J.H."/>
            <person name="Li Y.-P."/>
            <person name="Lin X."/>
            <person name="Liu S.X."/>
            <person name="Liu Z.A."/>
            <person name="Luros J.S."/>
            <person name="Maiti R."/>
            <person name="Marziali A."/>
            <person name="Militscher J."/>
            <person name="Miranda M."/>
            <person name="Nguyen M."/>
            <person name="Nierman W.C."/>
            <person name="Osborne B.I."/>
            <person name="Pai G."/>
            <person name="Peterson J."/>
            <person name="Pham P.K."/>
            <person name="Rizzo M."/>
            <person name="Rooney T."/>
            <person name="Rowley D."/>
            <person name="Sakano H."/>
            <person name="Salzberg S.L."/>
            <person name="Schwartz J.R."/>
            <person name="Shinn P."/>
            <person name="Southwick A.M."/>
            <person name="Sun H."/>
            <person name="Tallon L.J."/>
            <person name="Tambunga G."/>
            <person name="Toriumi M.J."/>
            <person name="Town C.D."/>
            <person name="Utterback T."/>
            <person name="Van Aken S."/>
            <person name="Vaysberg M."/>
            <person name="Vysotskaia V.S."/>
            <person name="Walker M."/>
            <person name="Wu D."/>
            <person name="Yu G."/>
            <person name="Fraser C.M."/>
            <person name="Venter J.C."/>
            <person name="Davis R.W."/>
        </authorList>
    </citation>
    <scope>NUCLEOTIDE SEQUENCE [LARGE SCALE GENOMIC DNA]</scope>
    <source>
        <strain>cv. Columbia</strain>
    </source>
</reference>
<reference key="2">
    <citation type="journal article" date="2017" name="Plant J.">
        <title>Araport11: a complete reannotation of the Arabidopsis thaliana reference genome.</title>
        <authorList>
            <person name="Cheng C.Y."/>
            <person name="Krishnakumar V."/>
            <person name="Chan A.P."/>
            <person name="Thibaud-Nissen F."/>
            <person name="Schobel S."/>
            <person name="Town C.D."/>
        </authorList>
    </citation>
    <scope>GENOME REANNOTATION</scope>
    <source>
        <strain>cv. Columbia</strain>
    </source>
</reference>
<reference key="3">
    <citation type="journal article" date="2008" name="Trends Plant Sci.">
        <title>The plant B3 superfamily.</title>
        <authorList>
            <person name="Swaminathan K."/>
            <person name="Peterson K."/>
            <person name="Jack T."/>
        </authorList>
    </citation>
    <scope>GENE FAMILY</scope>
</reference>
<proteinExistence type="evidence at transcript level"/>